<comment type="function">
    <text evidence="1 3">Orphan G-protein coupled receptor. Seems to act through a G(i)/G(o) mediated pathway (By similarity). May be involved in ciliogenesis (By similarity).</text>
</comment>
<comment type="subcellular location">
    <subcellularLocation>
        <location evidence="2">Cell membrane</location>
        <topology evidence="4">Multi-pass membrane protein</topology>
    </subcellularLocation>
</comment>
<comment type="tissue specificity">
    <text evidence="6">Abundant levels detected in the brain and heart and no detectable expression in other peripheral tissues.</text>
</comment>
<comment type="induction">
    <text evidence="6">Decreased expression in heart following aortic banding, a procedure that mimics cardiac hypertrophy produced by high blood pressure.</text>
</comment>
<comment type="disruption phenotype">
    <text evidence="6">No visible phenotype, however mice display increased susceptibility to heart failure under conditions of hemodynamic stress.</text>
</comment>
<comment type="similarity">
    <text evidence="5">Belongs to the G-protein coupled receptor 1 family.</text>
</comment>
<evidence type="ECO:0000250" key="1">
    <source>
        <dbReference type="UniProtKB" id="A0A2R9YJI3"/>
    </source>
</evidence>
<evidence type="ECO:0000250" key="2">
    <source>
        <dbReference type="UniProtKB" id="D4A3U0"/>
    </source>
</evidence>
<evidence type="ECO:0000250" key="3">
    <source>
        <dbReference type="UniProtKB" id="Q99680"/>
    </source>
</evidence>
<evidence type="ECO:0000255" key="4"/>
<evidence type="ECO:0000255" key="5">
    <source>
        <dbReference type="PROSITE-ProRule" id="PRU00521"/>
    </source>
</evidence>
<evidence type="ECO:0000269" key="6">
    <source>
    </source>
</evidence>
<evidence type="ECO:0000305" key="7"/>
<gene>
    <name type="primary">Gpr22</name>
</gene>
<protein>
    <recommendedName>
        <fullName>G-protein coupled receptor 22</fullName>
    </recommendedName>
</protein>
<dbReference type="EMBL" id="AK034194">
    <property type="protein sequence ID" value="BAC28626.1"/>
    <property type="molecule type" value="mRNA"/>
</dbReference>
<dbReference type="EMBL" id="BC089509">
    <property type="protein sequence ID" value="AAH89509.1"/>
    <property type="molecule type" value="mRNA"/>
</dbReference>
<dbReference type="EMBL" id="AY255527">
    <property type="protein sequence ID" value="AAO85039.1"/>
    <property type="molecule type" value="mRNA"/>
</dbReference>
<dbReference type="CCDS" id="CCDS25866.3"/>
<dbReference type="RefSeq" id="NP_780400.3">
    <property type="nucleotide sequence ID" value="NM_175191.6"/>
</dbReference>
<dbReference type="SMR" id="Q8BZL4"/>
<dbReference type="FunCoup" id="Q8BZL4">
    <property type="interactions" value="1130"/>
</dbReference>
<dbReference type="STRING" id="10090.ENSMUSP00000158030"/>
<dbReference type="GlyCosmos" id="Q8BZL4">
    <property type="glycosylation" value="2 sites, No reported glycans"/>
</dbReference>
<dbReference type="GlyGen" id="Q8BZL4">
    <property type="glycosylation" value="2 sites"/>
</dbReference>
<dbReference type="iPTMnet" id="Q8BZL4"/>
<dbReference type="PhosphoSitePlus" id="Q8BZL4"/>
<dbReference type="PaxDb" id="10090-ENSMUSP00000056125"/>
<dbReference type="ProteomicsDB" id="271450"/>
<dbReference type="Antibodypedia" id="1939">
    <property type="antibodies" value="282 antibodies from 29 providers"/>
</dbReference>
<dbReference type="DNASU" id="73010"/>
<dbReference type="Ensembl" id="ENSMUST00000057783.6">
    <property type="protein sequence ID" value="ENSMUSP00000056125.6"/>
    <property type="gene ID" value="ENSMUSG00000044067.8"/>
</dbReference>
<dbReference type="Ensembl" id="ENSMUST00000176710.2">
    <property type="protein sequence ID" value="ENSMUSP00000134839.2"/>
    <property type="gene ID" value="ENSMUSG00000044067.8"/>
</dbReference>
<dbReference type="GeneID" id="73010"/>
<dbReference type="KEGG" id="mmu:73010"/>
<dbReference type="AGR" id="MGI:1920260"/>
<dbReference type="CTD" id="2845"/>
<dbReference type="MGI" id="MGI:1920260">
    <property type="gene designation" value="Gpr22"/>
</dbReference>
<dbReference type="VEuPathDB" id="HostDB:ENSMUSG00000044067"/>
<dbReference type="eggNOG" id="KOG3656">
    <property type="taxonomic scope" value="Eukaryota"/>
</dbReference>
<dbReference type="GeneTree" id="ENSGT01130000278263"/>
<dbReference type="HOGENOM" id="CLU_057984_0_0_1"/>
<dbReference type="InParanoid" id="Q8BZL4"/>
<dbReference type="OMA" id="VGPSDLM"/>
<dbReference type="OrthoDB" id="6156007at2759"/>
<dbReference type="BioGRID-ORCS" id="73010">
    <property type="hits" value="1 hit in 61 CRISPR screens"/>
</dbReference>
<dbReference type="ChiTaRS" id="Gpr22">
    <property type="organism name" value="mouse"/>
</dbReference>
<dbReference type="PRO" id="PR:Q8BZL4"/>
<dbReference type="Proteomes" id="UP000000589">
    <property type="component" value="Chromosome 12"/>
</dbReference>
<dbReference type="RNAct" id="Q8BZL4">
    <property type="molecule type" value="protein"/>
</dbReference>
<dbReference type="Bgee" id="ENSMUSG00000044067">
    <property type="expression patterns" value="Expressed in subiculum and 96 other cell types or tissues"/>
</dbReference>
<dbReference type="ExpressionAtlas" id="Q8BZL4">
    <property type="expression patterns" value="baseline and differential"/>
</dbReference>
<dbReference type="GO" id="GO:0005886">
    <property type="term" value="C:plasma membrane"/>
    <property type="evidence" value="ECO:0000250"/>
    <property type="project" value="UniProtKB"/>
</dbReference>
<dbReference type="GO" id="GO:0004930">
    <property type="term" value="F:G protein-coupled receptor activity"/>
    <property type="evidence" value="ECO:0000250"/>
    <property type="project" value="UniProtKB"/>
</dbReference>
<dbReference type="GO" id="GO:0030030">
    <property type="term" value="P:cell projection organization"/>
    <property type="evidence" value="ECO:0007669"/>
    <property type="project" value="UniProtKB-KW"/>
</dbReference>
<dbReference type="CDD" id="cd00637">
    <property type="entry name" value="7tm_classA_rhodopsin-like"/>
    <property type="match status" value="1"/>
</dbReference>
<dbReference type="FunFam" id="1.20.1070.10:FF:000084">
    <property type="entry name" value="Probable G-protein coupled receptor 22"/>
    <property type="match status" value="1"/>
</dbReference>
<dbReference type="FunFam" id="1.20.1070.10:FF:000116">
    <property type="entry name" value="probable G-protein coupled receptor 22"/>
    <property type="match status" value="1"/>
</dbReference>
<dbReference type="Gene3D" id="1.20.1070.10">
    <property type="entry name" value="Rhodopsin 7-helix transmembrane proteins"/>
    <property type="match status" value="2"/>
</dbReference>
<dbReference type="InterPro" id="IPR000276">
    <property type="entry name" value="GPCR_Rhodpsn"/>
</dbReference>
<dbReference type="InterPro" id="IPR017452">
    <property type="entry name" value="GPCR_Rhodpsn_7TM"/>
</dbReference>
<dbReference type="PANTHER" id="PTHR24241:SF1">
    <property type="entry name" value="G-PROTEIN COUPLED RECEPTOR 22"/>
    <property type="match status" value="1"/>
</dbReference>
<dbReference type="PANTHER" id="PTHR24241">
    <property type="entry name" value="NEUROPEPTIDE RECEPTOR-RELATED G-PROTEIN COUPLED RECEPTOR"/>
    <property type="match status" value="1"/>
</dbReference>
<dbReference type="Pfam" id="PF00001">
    <property type="entry name" value="7tm_1"/>
    <property type="match status" value="1"/>
</dbReference>
<dbReference type="PRINTS" id="PR00237">
    <property type="entry name" value="GPCRRHODOPSN"/>
</dbReference>
<dbReference type="SUPFAM" id="SSF81321">
    <property type="entry name" value="Family A G protein-coupled receptor-like"/>
    <property type="match status" value="2"/>
</dbReference>
<dbReference type="PROSITE" id="PS50262">
    <property type="entry name" value="G_PROTEIN_RECEP_F1_2"/>
    <property type="match status" value="1"/>
</dbReference>
<keyword id="KW-1003">Cell membrane</keyword>
<keyword id="KW-0970">Cilium biogenesis/degradation</keyword>
<keyword id="KW-0297">G-protein coupled receptor</keyword>
<keyword id="KW-0325">Glycoprotein</keyword>
<keyword id="KW-0472">Membrane</keyword>
<keyword id="KW-0675">Receptor</keyword>
<keyword id="KW-1185">Reference proteome</keyword>
<keyword id="KW-0807">Transducer</keyword>
<keyword id="KW-0812">Transmembrane</keyword>
<keyword id="KW-1133">Transmembrane helix</keyword>
<feature type="chain" id="PRO_0000303235" description="G-protein coupled receptor 22">
    <location>
        <begin position="1"/>
        <end position="432"/>
    </location>
</feature>
<feature type="topological domain" description="Extracellular" evidence="7">
    <location>
        <begin position="1"/>
        <end position="45"/>
    </location>
</feature>
<feature type="transmembrane region" description="Helical; Name=1" evidence="4">
    <location>
        <begin position="46"/>
        <end position="66"/>
    </location>
</feature>
<feature type="topological domain" description="Cytoplasmic" evidence="7">
    <location>
        <begin position="67"/>
        <end position="85"/>
    </location>
</feature>
<feature type="transmembrane region" description="Helical; Name=2" evidence="4">
    <location>
        <begin position="86"/>
        <end position="106"/>
    </location>
</feature>
<feature type="topological domain" description="Extracellular" evidence="7">
    <location>
        <begin position="107"/>
        <end position="115"/>
    </location>
</feature>
<feature type="transmembrane region" description="Helical; Name=3" evidence="4">
    <location>
        <begin position="116"/>
        <end position="136"/>
    </location>
</feature>
<feature type="topological domain" description="Cytoplasmic" evidence="7">
    <location>
        <begin position="137"/>
        <end position="156"/>
    </location>
</feature>
<feature type="transmembrane region" description="Helical; Name=4" evidence="4">
    <location>
        <begin position="157"/>
        <end position="177"/>
    </location>
</feature>
<feature type="topological domain" description="Extracellular" evidence="7">
    <location>
        <begin position="178"/>
        <end position="208"/>
    </location>
</feature>
<feature type="transmembrane region" description="Helical; Name=5" evidence="4">
    <location>
        <begin position="209"/>
        <end position="229"/>
    </location>
</feature>
<feature type="topological domain" description="Cytoplasmic" evidence="7">
    <location>
        <begin position="230"/>
        <end position="314"/>
    </location>
</feature>
<feature type="transmembrane region" description="Helical; Name=6" evidence="4">
    <location>
        <begin position="315"/>
        <end position="335"/>
    </location>
</feature>
<feature type="topological domain" description="Extracellular" evidence="7">
    <location>
        <begin position="336"/>
        <end position="348"/>
    </location>
</feature>
<feature type="transmembrane region" description="Helical; Name=7" evidence="4">
    <location>
        <begin position="349"/>
        <end position="369"/>
    </location>
</feature>
<feature type="topological domain" description="Cytoplasmic" evidence="7">
    <location>
        <begin position="370"/>
        <end position="432"/>
    </location>
</feature>
<feature type="glycosylation site" description="N-linked (GlcNAc...) asparagine" evidence="4">
    <location>
        <position position="16"/>
    </location>
</feature>
<feature type="glycosylation site" description="N-linked (GlcNAc...) asparagine" evidence="4">
    <location>
        <position position="192"/>
    </location>
</feature>
<proteinExistence type="evidence at transcript level"/>
<accession>Q8BZL4</accession>
<accession>Q80UE1</accession>
<name>GPR22_MOUSE</name>
<organism>
    <name type="scientific">Mus musculus</name>
    <name type="common">Mouse</name>
    <dbReference type="NCBI Taxonomy" id="10090"/>
    <lineage>
        <taxon>Eukaryota</taxon>
        <taxon>Metazoa</taxon>
        <taxon>Chordata</taxon>
        <taxon>Craniata</taxon>
        <taxon>Vertebrata</taxon>
        <taxon>Euteleostomi</taxon>
        <taxon>Mammalia</taxon>
        <taxon>Eutheria</taxon>
        <taxon>Euarchontoglires</taxon>
        <taxon>Glires</taxon>
        <taxon>Rodentia</taxon>
        <taxon>Myomorpha</taxon>
        <taxon>Muroidea</taxon>
        <taxon>Muridae</taxon>
        <taxon>Murinae</taxon>
        <taxon>Mus</taxon>
        <taxon>Mus</taxon>
    </lineage>
</organism>
<reference key="1">
    <citation type="journal article" date="2005" name="Science">
        <title>The transcriptional landscape of the mammalian genome.</title>
        <authorList>
            <person name="Carninci P."/>
            <person name="Kasukawa T."/>
            <person name="Katayama S."/>
            <person name="Gough J."/>
            <person name="Frith M.C."/>
            <person name="Maeda N."/>
            <person name="Oyama R."/>
            <person name="Ravasi T."/>
            <person name="Lenhard B."/>
            <person name="Wells C."/>
            <person name="Kodzius R."/>
            <person name="Shimokawa K."/>
            <person name="Bajic V.B."/>
            <person name="Brenner S.E."/>
            <person name="Batalov S."/>
            <person name="Forrest A.R."/>
            <person name="Zavolan M."/>
            <person name="Davis M.J."/>
            <person name="Wilming L.G."/>
            <person name="Aidinis V."/>
            <person name="Allen J.E."/>
            <person name="Ambesi-Impiombato A."/>
            <person name="Apweiler R."/>
            <person name="Aturaliya R.N."/>
            <person name="Bailey T.L."/>
            <person name="Bansal M."/>
            <person name="Baxter L."/>
            <person name="Beisel K.W."/>
            <person name="Bersano T."/>
            <person name="Bono H."/>
            <person name="Chalk A.M."/>
            <person name="Chiu K.P."/>
            <person name="Choudhary V."/>
            <person name="Christoffels A."/>
            <person name="Clutterbuck D.R."/>
            <person name="Crowe M.L."/>
            <person name="Dalla E."/>
            <person name="Dalrymple B.P."/>
            <person name="de Bono B."/>
            <person name="Della Gatta G."/>
            <person name="di Bernardo D."/>
            <person name="Down T."/>
            <person name="Engstrom P."/>
            <person name="Fagiolini M."/>
            <person name="Faulkner G."/>
            <person name="Fletcher C.F."/>
            <person name="Fukushima T."/>
            <person name="Furuno M."/>
            <person name="Futaki S."/>
            <person name="Gariboldi M."/>
            <person name="Georgii-Hemming P."/>
            <person name="Gingeras T.R."/>
            <person name="Gojobori T."/>
            <person name="Green R.E."/>
            <person name="Gustincich S."/>
            <person name="Harbers M."/>
            <person name="Hayashi Y."/>
            <person name="Hensch T.K."/>
            <person name="Hirokawa N."/>
            <person name="Hill D."/>
            <person name="Huminiecki L."/>
            <person name="Iacono M."/>
            <person name="Ikeo K."/>
            <person name="Iwama A."/>
            <person name="Ishikawa T."/>
            <person name="Jakt M."/>
            <person name="Kanapin A."/>
            <person name="Katoh M."/>
            <person name="Kawasawa Y."/>
            <person name="Kelso J."/>
            <person name="Kitamura H."/>
            <person name="Kitano H."/>
            <person name="Kollias G."/>
            <person name="Krishnan S.P."/>
            <person name="Kruger A."/>
            <person name="Kummerfeld S.K."/>
            <person name="Kurochkin I.V."/>
            <person name="Lareau L.F."/>
            <person name="Lazarevic D."/>
            <person name="Lipovich L."/>
            <person name="Liu J."/>
            <person name="Liuni S."/>
            <person name="McWilliam S."/>
            <person name="Madan Babu M."/>
            <person name="Madera M."/>
            <person name="Marchionni L."/>
            <person name="Matsuda H."/>
            <person name="Matsuzawa S."/>
            <person name="Miki H."/>
            <person name="Mignone F."/>
            <person name="Miyake S."/>
            <person name="Morris K."/>
            <person name="Mottagui-Tabar S."/>
            <person name="Mulder N."/>
            <person name="Nakano N."/>
            <person name="Nakauchi H."/>
            <person name="Ng P."/>
            <person name="Nilsson R."/>
            <person name="Nishiguchi S."/>
            <person name="Nishikawa S."/>
            <person name="Nori F."/>
            <person name="Ohara O."/>
            <person name="Okazaki Y."/>
            <person name="Orlando V."/>
            <person name="Pang K.C."/>
            <person name="Pavan W.J."/>
            <person name="Pavesi G."/>
            <person name="Pesole G."/>
            <person name="Petrovsky N."/>
            <person name="Piazza S."/>
            <person name="Reed J."/>
            <person name="Reid J.F."/>
            <person name="Ring B.Z."/>
            <person name="Ringwald M."/>
            <person name="Rost B."/>
            <person name="Ruan Y."/>
            <person name="Salzberg S.L."/>
            <person name="Sandelin A."/>
            <person name="Schneider C."/>
            <person name="Schoenbach C."/>
            <person name="Sekiguchi K."/>
            <person name="Semple C.A."/>
            <person name="Seno S."/>
            <person name="Sessa L."/>
            <person name="Sheng Y."/>
            <person name="Shibata Y."/>
            <person name="Shimada H."/>
            <person name="Shimada K."/>
            <person name="Silva D."/>
            <person name="Sinclair B."/>
            <person name="Sperling S."/>
            <person name="Stupka E."/>
            <person name="Sugiura K."/>
            <person name="Sultana R."/>
            <person name="Takenaka Y."/>
            <person name="Taki K."/>
            <person name="Tammoja K."/>
            <person name="Tan S.L."/>
            <person name="Tang S."/>
            <person name="Taylor M.S."/>
            <person name="Tegner J."/>
            <person name="Teichmann S.A."/>
            <person name="Ueda H.R."/>
            <person name="van Nimwegen E."/>
            <person name="Verardo R."/>
            <person name="Wei C.L."/>
            <person name="Yagi K."/>
            <person name="Yamanishi H."/>
            <person name="Zabarovsky E."/>
            <person name="Zhu S."/>
            <person name="Zimmer A."/>
            <person name="Hide W."/>
            <person name="Bult C."/>
            <person name="Grimmond S.M."/>
            <person name="Teasdale R.D."/>
            <person name="Liu E.T."/>
            <person name="Brusic V."/>
            <person name="Quackenbush J."/>
            <person name="Wahlestedt C."/>
            <person name="Mattick J.S."/>
            <person name="Hume D.A."/>
            <person name="Kai C."/>
            <person name="Sasaki D."/>
            <person name="Tomaru Y."/>
            <person name="Fukuda S."/>
            <person name="Kanamori-Katayama M."/>
            <person name="Suzuki M."/>
            <person name="Aoki J."/>
            <person name="Arakawa T."/>
            <person name="Iida J."/>
            <person name="Imamura K."/>
            <person name="Itoh M."/>
            <person name="Kato T."/>
            <person name="Kawaji H."/>
            <person name="Kawagashira N."/>
            <person name="Kawashima T."/>
            <person name="Kojima M."/>
            <person name="Kondo S."/>
            <person name="Konno H."/>
            <person name="Nakano K."/>
            <person name="Ninomiya N."/>
            <person name="Nishio T."/>
            <person name="Okada M."/>
            <person name="Plessy C."/>
            <person name="Shibata K."/>
            <person name="Shiraki T."/>
            <person name="Suzuki S."/>
            <person name="Tagami M."/>
            <person name="Waki K."/>
            <person name="Watahiki A."/>
            <person name="Okamura-Oho Y."/>
            <person name="Suzuki H."/>
            <person name="Kawai J."/>
            <person name="Hayashizaki Y."/>
        </authorList>
    </citation>
    <scope>NUCLEOTIDE SEQUENCE [LARGE SCALE MRNA]</scope>
    <source>
        <strain>C57BL/6J</strain>
        <tissue>Diencephalon</tissue>
    </source>
</reference>
<reference key="2">
    <citation type="journal article" date="2004" name="Genome Res.">
        <title>The status, quality, and expansion of the NIH full-length cDNA project: the Mammalian Gene Collection (MGC).</title>
        <authorList>
            <consortium name="The MGC Project Team"/>
        </authorList>
    </citation>
    <scope>NUCLEOTIDE SEQUENCE [LARGE SCALE MRNA]</scope>
    <source>
        <tissue>Pituitary</tissue>
    </source>
</reference>
<reference key="3">
    <citation type="journal article" date="2003" name="Proc. Natl. Acad. Sci. U.S.A.">
        <title>The G protein-coupled receptor repertoires of human and mouse.</title>
        <authorList>
            <person name="Vassilatis D.K."/>
            <person name="Hohmann J.G."/>
            <person name="Zeng H."/>
            <person name="Li F."/>
            <person name="Ranchalis J.E."/>
            <person name="Mortrud M.T."/>
            <person name="Brown A."/>
            <person name="Rodriguez S.S."/>
            <person name="Weller J.R."/>
            <person name="Wright A.C."/>
            <person name="Bergmann J.E."/>
            <person name="Gaitanaris G.A."/>
        </authorList>
    </citation>
    <scope>NUCLEOTIDE SEQUENCE [LARGE SCALE MRNA] OF 52-212</scope>
</reference>
<reference key="4">
    <citation type="journal article" date="2008" name="Am. J. Physiol.">
        <title>Myocardial expression, signaling, and function of GPR22: a protective role for an orphan G protein-coupled receptor.</title>
        <authorList>
            <person name="Adams J.W."/>
            <person name="Wang J."/>
            <person name="Davis J.R."/>
            <person name="Liaw C."/>
            <person name="Gaidarov I."/>
            <person name="Gatlin J."/>
            <person name="Dalton N.D."/>
            <person name="Gu Y."/>
            <person name="Ross J. Jr."/>
            <person name="Behan D."/>
            <person name="Chien K."/>
            <person name="Connolly D."/>
        </authorList>
    </citation>
    <scope>TISSUE SPECIFICITY</scope>
    <scope>INDUCTION</scope>
    <scope>DISRUPTION PHENOTYPE</scope>
</reference>
<sequence length="432" mass="49019">MCFSPVLEINMQSESNVTVRDDIDDIDTNMYQPLSYPLSFQVSLTGFLMLEIVLGLGSNLTVLVLYCMKSNLINSVSNIITMNLHVLDVIICVGCIPLTIVILLLSLESNTALICCFHEACVSFASVSTAINVFAITLDRYDISVKPANRILTMGRAVMLMTSIWIFSFFSFLIPFIEVNFFSLQSGNTWANKTLLCVSTSEYYTELGMYYHLLVQIPIFFFTVIVMLITYTKILQALNIRIGTRFSTGQKKKARKKKTISLATHETTDMSQSSGGRNVVFGVRTSVSVIIALRRAVKRHRERRERQKRVFKMSLLIISTFLLCWTPISVLNTTILCLGPSDLLVKLRLCFLVMAYGTTIFHPLLYAFTRQKFQKVLKSKMKKRVVSIVEADPMPNNAVIHNSWIDPKRNKKVTYEDSEIREKCLVPQVVTD</sequence>